<feature type="chain" id="PRO_0000352343" description="Malonate-semialdehyde dehydrogenase 2">
    <location>
        <begin position="1"/>
        <end position="483"/>
    </location>
</feature>
<feature type="active site" description="Nucleophile" evidence="1">
    <location>
        <position position="284"/>
    </location>
</feature>
<feature type="binding site" evidence="1">
    <location>
        <position position="152"/>
    </location>
    <ligand>
        <name>NAD(+)</name>
        <dbReference type="ChEBI" id="CHEBI:57540"/>
    </ligand>
</feature>
<feature type="binding site" evidence="1">
    <location>
        <position position="176"/>
    </location>
    <ligand>
        <name>NAD(+)</name>
        <dbReference type="ChEBI" id="CHEBI:57540"/>
    </ligand>
</feature>
<feature type="binding site" evidence="1">
    <location>
        <position position="179"/>
    </location>
    <ligand>
        <name>NAD(+)</name>
        <dbReference type="ChEBI" id="CHEBI:57540"/>
    </ligand>
</feature>
<feature type="binding site" evidence="1">
    <location>
        <position position="180"/>
    </location>
    <ligand>
        <name>NAD(+)</name>
        <dbReference type="ChEBI" id="CHEBI:57540"/>
    </ligand>
</feature>
<feature type="binding site" evidence="1">
    <location>
        <position position="229"/>
    </location>
    <ligand>
        <name>NAD(+)</name>
        <dbReference type="ChEBI" id="CHEBI:57540"/>
    </ligand>
</feature>
<feature type="binding site" evidence="1">
    <location>
        <position position="384"/>
    </location>
    <ligand>
        <name>NAD(+)</name>
        <dbReference type="ChEBI" id="CHEBI:57540"/>
    </ligand>
</feature>
<gene>
    <name evidence="1" type="primary">iolA2</name>
    <name type="ordered locus">GTNG_1849</name>
</gene>
<sequence>MTETKTLKNFIGGQWVASTSGKEEIVPNPATGEVLAKVPISSREELDAAVAAAKEAFREWRKVPVPRRARILFRYQQLLVEHWEELARLVTLENGKVYEDAYGEVQRGIECVEFAAGIPTLMMGQQLPDIATGIESGMYRYPLGVVAGITPFNFPMMVPCWMFPLAIACGNTFVLKPSERTPLLANRLAELFTEAGLPAGVLNIVHGAHEVVNGILEHKDIKAVSFVGSQPVAEYVYKTAAAYGKRVQALAGAKNHSIVMPDADLDMAVTNIINAAFGSAGERCMACSVVVAVGDIADELVERLKKAADRIQIGNGLDQGVFLGPVIRESHKERTIKYIEIGEREGALLVRDGRRDAATSGKGYFVGPTIFDHVKPGMTIWTDEIFAPVLSVVRARDLDEAIEIANRSEFANGACIYTDSAKAIRQFREEIDAGMLGVNVAVPAPMAFFPFSGYKNSFYGDLHANGRDGVEFYTRKKMVTARH</sequence>
<keyword id="KW-0520">NAD</keyword>
<keyword id="KW-0560">Oxidoreductase</keyword>
<name>IOLA2_GEOTN</name>
<proteinExistence type="inferred from homology"/>
<reference key="1">
    <citation type="journal article" date="2007" name="Proc. Natl. Acad. Sci. U.S.A.">
        <title>Genome and proteome of long-chain alkane degrading Geobacillus thermodenitrificans NG80-2 isolated from a deep-subsurface oil reservoir.</title>
        <authorList>
            <person name="Feng L."/>
            <person name="Wang W."/>
            <person name="Cheng J."/>
            <person name="Ren Y."/>
            <person name="Zhao G."/>
            <person name="Gao C."/>
            <person name="Tang Y."/>
            <person name="Liu X."/>
            <person name="Han W."/>
            <person name="Peng X."/>
            <person name="Liu R."/>
            <person name="Wang L."/>
        </authorList>
    </citation>
    <scope>NUCLEOTIDE SEQUENCE [LARGE SCALE GENOMIC DNA]</scope>
    <source>
        <strain>NG80-2</strain>
    </source>
</reference>
<dbReference type="EC" id="1.2.1.27" evidence="1"/>
<dbReference type="EMBL" id="CP000557">
    <property type="protein sequence ID" value="ABO67209.1"/>
    <property type="status" value="ALT_INIT"/>
    <property type="molecule type" value="Genomic_DNA"/>
</dbReference>
<dbReference type="RefSeq" id="WP_008879983.1">
    <property type="nucleotide sequence ID" value="NC_009328.1"/>
</dbReference>
<dbReference type="SMR" id="A4IPF5"/>
<dbReference type="KEGG" id="gtn:GTNG_1849"/>
<dbReference type="eggNOG" id="COG1012">
    <property type="taxonomic scope" value="Bacteria"/>
</dbReference>
<dbReference type="HOGENOM" id="CLU_005391_1_0_9"/>
<dbReference type="UniPathway" id="UPA00076">
    <property type="reaction ID" value="UER00148"/>
</dbReference>
<dbReference type="Proteomes" id="UP000001578">
    <property type="component" value="Chromosome"/>
</dbReference>
<dbReference type="GO" id="GO:0018478">
    <property type="term" value="F:malonate-semialdehyde dehydrogenase (acetylating) activity"/>
    <property type="evidence" value="ECO:0007669"/>
    <property type="project" value="UniProtKB-UniRule"/>
</dbReference>
<dbReference type="GO" id="GO:0004491">
    <property type="term" value="F:methylmalonate-semialdehyde dehydrogenase (acylating, NAD) activity"/>
    <property type="evidence" value="ECO:0007669"/>
    <property type="project" value="UniProtKB-UniRule"/>
</dbReference>
<dbReference type="GO" id="GO:0019310">
    <property type="term" value="P:inositol catabolic process"/>
    <property type="evidence" value="ECO:0007669"/>
    <property type="project" value="UniProtKB-UniRule"/>
</dbReference>
<dbReference type="GO" id="GO:0006210">
    <property type="term" value="P:thymine catabolic process"/>
    <property type="evidence" value="ECO:0007669"/>
    <property type="project" value="TreeGrafter"/>
</dbReference>
<dbReference type="GO" id="GO:0006574">
    <property type="term" value="P:valine catabolic process"/>
    <property type="evidence" value="ECO:0007669"/>
    <property type="project" value="TreeGrafter"/>
</dbReference>
<dbReference type="CDD" id="cd07085">
    <property type="entry name" value="ALDH_F6_MMSDH"/>
    <property type="match status" value="1"/>
</dbReference>
<dbReference type="FunFam" id="3.40.309.10:FF:000002">
    <property type="entry name" value="Methylmalonate-semialdehyde dehydrogenase (Acylating)"/>
    <property type="match status" value="1"/>
</dbReference>
<dbReference type="FunFam" id="3.40.605.10:FF:000003">
    <property type="entry name" value="Methylmalonate-semialdehyde dehydrogenase [acylating]"/>
    <property type="match status" value="1"/>
</dbReference>
<dbReference type="Gene3D" id="3.40.605.10">
    <property type="entry name" value="Aldehyde Dehydrogenase, Chain A, domain 1"/>
    <property type="match status" value="1"/>
</dbReference>
<dbReference type="Gene3D" id="3.40.309.10">
    <property type="entry name" value="Aldehyde Dehydrogenase, Chain A, domain 2"/>
    <property type="match status" value="1"/>
</dbReference>
<dbReference type="HAMAP" id="MF_01670">
    <property type="entry name" value="IolA"/>
    <property type="match status" value="1"/>
</dbReference>
<dbReference type="InterPro" id="IPR016161">
    <property type="entry name" value="Ald_DH/histidinol_DH"/>
</dbReference>
<dbReference type="InterPro" id="IPR016163">
    <property type="entry name" value="Ald_DH_C"/>
</dbReference>
<dbReference type="InterPro" id="IPR016160">
    <property type="entry name" value="Ald_DH_CS_CYS"/>
</dbReference>
<dbReference type="InterPro" id="IPR016162">
    <property type="entry name" value="Ald_DH_N"/>
</dbReference>
<dbReference type="InterPro" id="IPR015590">
    <property type="entry name" value="Aldehyde_DH_dom"/>
</dbReference>
<dbReference type="InterPro" id="IPR010061">
    <property type="entry name" value="MeMal-semiAld_DH"/>
</dbReference>
<dbReference type="InterPro" id="IPR023510">
    <property type="entry name" value="MSDH_GmP_bac"/>
</dbReference>
<dbReference type="NCBIfam" id="TIGR01722">
    <property type="entry name" value="MMSDH"/>
    <property type="match status" value="1"/>
</dbReference>
<dbReference type="PANTHER" id="PTHR43866">
    <property type="entry name" value="MALONATE-SEMIALDEHYDE DEHYDROGENASE"/>
    <property type="match status" value="1"/>
</dbReference>
<dbReference type="PANTHER" id="PTHR43866:SF4">
    <property type="entry name" value="MALONATE-SEMIALDEHYDE DEHYDROGENASE"/>
    <property type="match status" value="1"/>
</dbReference>
<dbReference type="Pfam" id="PF00171">
    <property type="entry name" value="Aldedh"/>
    <property type="match status" value="1"/>
</dbReference>
<dbReference type="SUPFAM" id="SSF53720">
    <property type="entry name" value="ALDH-like"/>
    <property type="match status" value="1"/>
</dbReference>
<dbReference type="PROSITE" id="PS00070">
    <property type="entry name" value="ALDEHYDE_DEHYDR_CYS"/>
    <property type="match status" value="1"/>
</dbReference>
<comment type="function">
    <text evidence="1">Catalyzes the oxidation of malonate semialdehyde (MSA) and methylmalonate semialdehyde (MMSA) into acetyl-CoA and propanoyl-CoA, respectively. Is involved in a myo-inositol catabolic pathway. Bicarbonate, and not CO2, is the end-product of the enzymatic reaction.</text>
</comment>
<comment type="catalytic activity">
    <reaction evidence="1">
        <text>3-oxopropanoate + NAD(+) + CoA + H2O = hydrogencarbonate + acetyl-CoA + NADH + H(+)</text>
        <dbReference type="Rhea" id="RHEA:76615"/>
        <dbReference type="ChEBI" id="CHEBI:15377"/>
        <dbReference type="ChEBI" id="CHEBI:15378"/>
        <dbReference type="ChEBI" id="CHEBI:17544"/>
        <dbReference type="ChEBI" id="CHEBI:33190"/>
        <dbReference type="ChEBI" id="CHEBI:57287"/>
        <dbReference type="ChEBI" id="CHEBI:57288"/>
        <dbReference type="ChEBI" id="CHEBI:57540"/>
        <dbReference type="ChEBI" id="CHEBI:57945"/>
        <dbReference type="EC" id="1.2.1.27"/>
    </reaction>
    <physiologicalReaction direction="left-to-right" evidence="1">
        <dbReference type="Rhea" id="RHEA:76616"/>
    </physiologicalReaction>
</comment>
<comment type="catalytic activity">
    <reaction evidence="1">
        <text>2-methyl-3-oxopropanoate + NAD(+) + CoA + H2O = propanoyl-CoA + hydrogencarbonate + NADH + H(+)</text>
        <dbReference type="Rhea" id="RHEA:20804"/>
        <dbReference type="ChEBI" id="CHEBI:15377"/>
        <dbReference type="ChEBI" id="CHEBI:15378"/>
        <dbReference type="ChEBI" id="CHEBI:17544"/>
        <dbReference type="ChEBI" id="CHEBI:57287"/>
        <dbReference type="ChEBI" id="CHEBI:57392"/>
        <dbReference type="ChEBI" id="CHEBI:57540"/>
        <dbReference type="ChEBI" id="CHEBI:57700"/>
        <dbReference type="ChEBI" id="CHEBI:57945"/>
        <dbReference type="EC" id="1.2.1.27"/>
    </reaction>
    <physiologicalReaction direction="left-to-right" evidence="1">
        <dbReference type="Rhea" id="RHEA:20805"/>
    </physiologicalReaction>
</comment>
<comment type="pathway">
    <text evidence="1">Polyol metabolism; myo-inositol degradation into acetyl-CoA; acetyl-CoA from myo-inositol: step 7/7.</text>
</comment>
<comment type="subunit">
    <text evidence="1">Homotetramer.</text>
</comment>
<comment type="similarity">
    <text evidence="1">Belongs to the aldehyde dehydrogenase family. IolA subfamily.</text>
</comment>
<comment type="sequence caution" evidence="2">
    <conflict type="erroneous initiation">
        <sequence resource="EMBL-CDS" id="ABO67209"/>
    </conflict>
</comment>
<accession>A4IPF5</accession>
<evidence type="ECO:0000255" key="1">
    <source>
        <dbReference type="HAMAP-Rule" id="MF_01670"/>
    </source>
</evidence>
<evidence type="ECO:0000305" key="2"/>
<organism>
    <name type="scientific">Geobacillus thermodenitrificans (strain NG80-2)</name>
    <dbReference type="NCBI Taxonomy" id="420246"/>
    <lineage>
        <taxon>Bacteria</taxon>
        <taxon>Bacillati</taxon>
        <taxon>Bacillota</taxon>
        <taxon>Bacilli</taxon>
        <taxon>Bacillales</taxon>
        <taxon>Anoxybacillaceae</taxon>
        <taxon>Geobacillus</taxon>
    </lineage>
</organism>
<protein>
    <recommendedName>
        <fullName evidence="1">Malonate-semialdehyde dehydrogenase 2</fullName>
        <shortName evidence="1">MSA dehydrogenase 2</shortName>
        <ecNumber evidence="1">1.2.1.27</ecNumber>
    </recommendedName>
    <alternativeName>
        <fullName evidence="1">Methylmalonate-semialdehyde dehydrogenase 2</fullName>
        <shortName evidence="1">MMSA dehydrogenase 2</shortName>
        <shortName evidence="1">MSDH 2</shortName>
    </alternativeName>
</protein>